<dbReference type="EMBL" id="AF158101">
    <property type="protein sequence ID" value="AAD42578.1"/>
    <property type="molecule type" value="Genomic_DNA"/>
</dbReference>
<dbReference type="RefSeq" id="NP_049851.1">
    <property type="nucleotide sequence ID" value="NC_000866.4"/>
</dbReference>
<dbReference type="GeneID" id="1258741"/>
<dbReference type="KEGG" id="vg:1258741"/>
<dbReference type="OrthoDB" id="21612at10239"/>
<dbReference type="Proteomes" id="UP000009087">
    <property type="component" value="Segment"/>
</dbReference>
<dbReference type="InterPro" id="IPR035392">
    <property type="entry name" value="DUF5417"/>
</dbReference>
<dbReference type="Pfam" id="PF17438">
    <property type="entry name" value="DUF5417"/>
    <property type="match status" value="1"/>
</dbReference>
<organismHost>
    <name type="scientific">Escherichia coli</name>
    <dbReference type="NCBI Taxonomy" id="562"/>
</organismHost>
<feature type="chain" id="PRO_0000165188" description="Uncharacterized 9.5 kDa protein in frd-Gp32 intergenic region">
    <location>
        <begin position="1"/>
        <end position="80"/>
    </location>
</feature>
<sequence length="80" mass="9471">MRLQRQSIKDSEVRGKWYFNIIGKDSELVEKAEHLLRDMGWEDECDGCPLYEDGESAGFWIYHSDVEQFKADWKIVKKSV</sequence>
<protein>
    <recommendedName>
        <fullName>Uncharacterized 9.5 kDa protein in frd-Gp32 intergenic region</fullName>
    </recommendedName>
</protein>
<proteinExistence type="predicted"/>
<organism>
    <name type="scientific">Enterobacteria phage T4</name>
    <name type="common">Bacteriophage T4</name>
    <dbReference type="NCBI Taxonomy" id="10665"/>
    <lineage>
        <taxon>Viruses</taxon>
        <taxon>Duplodnaviria</taxon>
        <taxon>Heunggongvirae</taxon>
        <taxon>Uroviricota</taxon>
        <taxon>Caudoviricetes</taxon>
        <taxon>Straboviridae</taxon>
        <taxon>Tevenvirinae</taxon>
        <taxon>Tequatrovirus</taxon>
    </lineage>
</organism>
<accession>P39506</accession>
<gene>
    <name type="primary">y14C</name>
    <name type="synonym">frd.1</name>
</gene>
<name>Y14C_BPT4</name>
<keyword id="KW-1185">Reference proteome</keyword>
<reference key="1">
    <citation type="journal article" date="2003" name="Microbiol. Mol. Biol. Rev.">
        <title>Bacteriophage T4 genome.</title>
        <authorList>
            <person name="Miller E.S."/>
            <person name="Kutter E."/>
            <person name="Mosig G."/>
            <person name="Arisaka F."/>
            <person name="Kunisawa T."/>
            <person name="Ruger W."/>
        </authorList>
    </citation>
    <scope>NUCLEOTIDE SEQUENCE [LARGE SCALE GENOMIC DNA]</scope>
</reference>